<dbReference type="EMBL" id="AM884176">
    <property type="protein sequence ID" value="CAP03651.1"/>
    <property type="molecule type" value="Genomic_DNA"/>
</dbReference>
<dbReference type="RefSeq" id="WP_009872966.1">
    <property type="nucleotide sequence ID" value="NC_010287.1"/>
</dbReference>
<dbReference type="RefSeq" id="YP_001654297.1">
    <property type="nucleotide sequence ID" value="NC_010287.1"/>
</dbReference>
<dbReference type="SMR" id="B0B964"/>
<dbReference type="KEGG" id="ctb:CTL0207"/>
<dbReference type="PATRIC" id="fig|471472.4.peg.224"/>
<dbReference type="HOGENOM" id="CLU_123265_0_1_0"/>
<dbReference type="Proteomes" id="UP001154402">
    <property type="component" value="Chromosome"/>
</dbReference>
<dbReference type="GO" id="GO:1990904">
    <property type="term" value="C:ribonucleoprotein complex"/>
    <property type="evidence" value="ECO:0007669"/>
    <property type="project" value="UniProtKB-KW"/>
</dbReference>
<dbReference type="GO" id="GO:0005840">
    <property type="term" value="C:ribosome"/>
    <property type="evidence" value="ECO:0007669"/>
    <property type="project" value="UniProtKB-KW"/>
</dbReference>
<dbReference type="GO" id="GO:0019843">
    <property type="term" value="F:rRNA binding"/>
    <property type="evidence" value="ECO:0007669"/>
    <property type="project" value="UniProtKB-UniRule"/>
</dbReference>
<dbReference type="GO" id="GO:0003735">
    <property type="term" value="F:structural constituent of ribosome"/>
    <property type="evidence" value="ECO:0007669"/>
    <property type="project" value="InterPro"/>
</dbReference>
<dbReference type="GO" id="GO:0000027">
    <property type="term" value="P:ribosomal large subunit assembly"/>
    <property type="evidence" value="ECO:0007669"/>
    <property type="project" value="UniProtKB-UniRule"/>
</dbReference>
<dbReference type="GO" id="GO:0006412">
    <property type="term" value="P:translation"/>
    <property type="evidence" value="ECO:0007669"/>
    <property type="project" value="InterPro"/>
</dbReference>
<dbReference type="CDD" id="cd07026">
    <property type="entry name" value="Ribosomal_L20"/>
    <property type="match status" value="1"/>
</dbReference>
<dbReference type="FunFam" id="1.10.1900.20:FF:000001">
    <property type="entry name" value="50S ribosomal protein L20"/>
    <property type="match status" value="1"/>
</dbReference>
<dbReference type="Gene3D" id="6.10.160.10">
    <property type="match status" value="1"/>
</dbReference>
<dbReference type="Gene3D" id="1.10.1900.20">
    <property type="entry name" value="Ribosomal protein L20"/>
    <property type="match status" value="1"/>
</dbReference>
<dbReference type="HAMAP" id="MF_00382">
    <property type="entry name" value="Ribosomal_bL20"/>
    <property type="match status" value="1"/>
</dbReference>
<dbReference type="InterPro" id="IPR005813">
    <property type="entry name" value="Ribosomal_bL20"/>
</dbReference>
<dbReference type="InterPro" id="IPR049946">
    <property type="entry name" value="RIBOSOMAL_L20_CS"/>
</dbReference>
<dbReference type="InterPro" id="IPR035566">
    <property type="entry name" value="Ribosomal_protein_bL20_C"/>
</dbReference>
<dbReference type="NCBIfam" id="TIGR01032">
    <property type="entry name" value="rplT_bact"/>
    <property type="match status" value="1"/>
</dbReference>
<dbReference type="PANTHER" id="PTHR10986">
    <property type="entry name" value="39S RIBOSOMAL PROTEIN L20"/>
    <property type="match status" value="1"/>
</dbReference>
<dbReference type="Pfam" id="PF00453">
    <property type="entry name" value="Ribosomal_L20"/>
    <property type="match status" value="1"/>
</dbReference>
<dbReference type="PRINTS" id="PR00062">
    <property type="entry name" value="RIBOSOMALL20"/>
</dbReference>
<dbReference type="SUPFAM" id="SSF74731">
    <property type="entry name" value="Ribosomal protein L20"/>
    <property type="match status" value="1"/>
</dbReference>
<dbReference type="PROSITE" id="PS00937">
    <property type="entry name" value="RIBOSOMAL_L20"/>
    <property type="match status" value="1"/>
</dbReference>
<organism>
    <name type="scientific">Chlamydia trachomatis serovar L2 (strain ATCC VR-902B / DSM 19102 / 434/Bu)</name>
    <dbReference type="NCBI Taxonomy" id="471472"/>
    <lineage>
        <taxon>Bacteria</taxon>
        <taxon>Pseudomonadati</taxon>
        <taxon>Chlamydiota</taxon>
        <taxon>Chlamydiia</taxon>
        <taxon>Chlamydiales</taxon>
        <taxon>Chlamydiaceae</taxon>
        <taxon>Chlamydia/Chlamydophila group</taxon>
        <taxon>Chlamydia</taxon>
    </lineage>
</organism>
<gene>
    <name evidence="1" type="primary">rplT</name>
    <name type="ordered locus">CTL0207</name>
</gene>
<keyword id="KW-0687">Ribonucleoprotein</keyword>
<keyword id="KW-0689">Ribosomal protein</keyword>
<keyword id="KW-0694">RNA-binding</keyword>
<keyword id="KW-0699">rRNA-binding</keyword>
<sequence length="123" mass="13936">MVRATGSVASRSRRKRVLKQAKGFWGDRKGHFRQSRSSVMRAMAFNYMHRKDRKGDFRSLWITRLNVASRIHGLSYSRLINGLKQAGIHLNRKMLSEMAIHDPQGFAVVATQAKLALEAAVQG</sequence>
<feature type="chain" id="PRO_1000122292" description="Large ribosomal subunit protein bL20">
    <location>
        <begin position="1"/>
        <end position="123"/>
    </location>
</feature>
<proteinExistence type="inferred from homology"/>
<protein>
    <recommendedName>
        <fullName evidence="1">Large ribosomal subunit protein bL20</fullName>
    </recommendedName>
    <alternativeName>
        <fullName evidence="2">50S ribosomal protein L20</fullName>
    </alternativeName>
</protein>
<comment type="function">
    <text evidence="1">Binds directly to 23S ribosomal RNA and is necessary for the in vitro assembly process of the 50S ribosomal subunit. It is not involved in the protein synthesizing functions of that subunit.</text>
</comment>
<comment type="similarity">
    <text evidence="1">Belongs to the bacterial ribosomal protein bL20 family.</text>
</comment>
<reference key="1">
    <citation type="journal article" date="2008" name="Genome Res.">
        <title>Chlamydia trachomatis: genome sequence analysis of lymphogranuloma venereum isolates.</title>
        <authorList>
            <person name="Thomson N.R."/>
            <person name="Holden M.T.G."/>
            <person name="Carder C."/>
            <person name="Lennard N."/>
            <person name="Lockey S.J."/>
            <person name="Marsh P."/>
            <person name="Skipp P."/>
            <person name="O'Connor C.D."/>
            <person name="Goodhead I."/>
            <person name="Norbertzcak H."/>
            <person name="Harris B."/>
            <person name="Ormond D."/>
            <person name="Rance R."/>
            <person name="Quail M.A."/>
            <person name="Parkhill J."/>
            <person name="Stephens R.S."/>
            <person name="Clarke I.N."/>
        </authorList>
    </citation>
    <scope>NUCLEOTIDE SEQUENCE [LARGE SCALE GENOMIC DNA]</scope>
    <source>
        <strain>ATCC VR-902B / DSM 19102 / 434/Bu</strain>
    </source>
</reference>
<name>RL20_CHLT2</name>
<accession>B0B964</accession>
<evidence type="ECO:0000255" key="1">
    <source>
        <dbReference type="HAMAP-Rule" id="MF_00382"/>
    </source>
</evidence>
<evidence type="ECO:0000305" key="2"/>